<keyword id="KW-0067">ATP-binding</keyword>
<keyword id="KW-0520">NAD</keyword>
<keyword id="KW-0547">Nucleotide-binding</keyword>
<keyword id="KW-0548">Nucleotidyltransferase</keyword>
<keyword id="KW-0662">Pyridine nucleotide biosynthesis</keyword>
<keyword id="KW-1185">Reference proteome</keyword>
<keyword id="KW-0808">Transferase</keyword>
<evidence type="ECO:0000255" key="1">
    <source>
        <dbReference type="HAMAP-Rule" id="MF_00244"/>
    </source>
</evidence>
<dbReference type="EC" id="2.7.7.18" evidence="1"/>
<dbReference type="EMBL" id="CP001390">
    <property type="protein sequence ID" value="ACM18974.1"/>
    <property type="molecule type" value="Genomic_DNA"/>
</dbReference>
<dbReference type="RefSeq" id="WP_012645703.1">
    <property type="nucleotide sequence ID" value="NC_011979.1"/>
</dbReference>
<dbReference type="SMR" id="B9M0D7"/>
<dbReference type="STRING" id="316067.Geob_0609"/>
<dbReference type="KEGG" id="geo:Geob_0609"/>
<dbReference type="eggNOG" id="COG1057">
    <property type="taxonomic scope" value="Bacteria"/>
</dbReference>
<dbReference type="HOGENOM" id="CLU_069765_0_1_7"/>
<dbReference type="OrthoDB" id="5295945at2"/>
<dbReference type="UniPathway" id="UPA00253">
    <property type="reaction ID" value="UER00332"/>
</dbReference>
<dbReference type="Proteomes" id="UP000007721">
    <property type="component" value="Chromosome"/>
</dbReference>
<dbReference type="GO" id="GO:0005524">
    <property type="term" value="F:ATP binding"/>
    <property type="evidence" value="ECO:0007669"/>
    <property type="project" value="UniProtKB-KW"/>
</dbReference>
<dbReference type="GO" id="GO:0004515">
    <property type="term" value="F:nicotinate-nucleotide adenylyltransferase activity"/>
    <property type="evidence" value="ECO:0007669"/>
    <property type="project" value="UniProtKB-UniRule"/>
</dbReference>
<dbReference type="GO" id="GO:0009435">
    <property type="term" value="P:NAD biosynthetic process"/>
    <property type="evidence" value="ECO:0007669"/>
    <property type="project" value="UniProtKB-UniRule"/>
</dbReference>
<dbReference type="CDD" id="cd02165">
    <property type="entry name" value="NMNAT"/>
    <property type="match status" value="1"/>
</dbReference>
<dbReference type="Gene3D" id="3.40.50.620">
    <property type="entry name" value="HUPs"/>
    <property type="match status" value="1"/>
</dbReference>
<dbReference type="HAMAP" id="MF_00244">
    <property type="entry name" value="NaMN_adenylyltr"/>
    <property type="match status" value="1"/>
</dbReference>
<dbReference type="InterPro" id="IPR004821">
    <property type="entry name" value="Cyt_trans-like"/>
</dbReference>
<dbReference type="InterPro" id="IPR005248">
    <property type="entry name" value="NadD/NMNAT"/>
</dbReference>
<dbReference type="InterPro" id="IPR014729">
    <property type="entry name" value="Rossmann-like_a/b/a_fold"/>
</dbReference>
<dbReference type="NCBIfam" id="TIGR00125">
    <property type="entry name" value="cyt_tran_rel"/>
    <property type="match status" value="1"/>
</dbReference>
<dbReference type="NCBIfam" id="TIGR00482">
    <property type="entry name" value="nicotinate (nicotinamide) nucleotide adenylyltransferase"/>
    <property type="match status" value="1"/>
</dbReference>
<dbReference type="NCBIfam" id="NF000840">
    <property type="entry name" value="PRK00071.1-3"/>
    <property type="match status" value="1"/>
</dbReference>
<dbReference type="PANTHER" id="PTHR39321">
    <property type="entry name" value="NICOTINATE-NUCLEOTIDE ADENYLYLTRANSFERASE-RELATED"/>
    <property type="match status" value="1"/>
</dbReference>
<dbReference type="PANTHER" id="PTHR39321:SF3">
    <property type="entry name" value="PHOSPHOPANTETHEINE ADENYLYLTRANSFERASE"/>
    <property type="match status" value="1"/>
</dbReference>
<dbReference type="Pfam" id="PF01467">
    <property type="entry name" value="CTP_transf_like"/>
    <property type="match status" value="1"/>
</dbReference>
<dbReference type="SUPFAM" id="SSF52374">
    <property type="entry name" value="Nucleotidylyl transferase"/>
    <property type="match status" value="1"/>
</dbReference>
<gene>
    <name evidence="1" type="primary">nadD</name>
    <name type="ordered locus">Geob_0609</name>
</gene>
<reference key="1">
    <citation type="submission" date="2009-01" db="EMBL/GenBank/DDBJ databases">
        <title>Complete sequence of Geobacter sp. FRC-32.</title>
        <authorList>
            <consortium name="US DOE Joint Genome Institute"/>
            <person name="Lucas S."/>
            <person name="Copeland A."/>
            <person name="Lapidus A."/>
            <person name="Glavina del Rio T."/>
            <person name="Dalin E."/>
            <person name="Tice H."/>
            <person name="Bruce D."/>
            <person name="Goodwin L."/>
            <person name="Pitluck S."/>
            <person name="Saunders E."/>
            <person name="Brettin T."/>
            <person name="Detter J.C."/>
            <person name="Han C."/>
            <person name="Larimer F."/>
            <person name="Land M."/>
            <person name="Hauser L."/>
            <person name="Kyrpides N."/>
            <person name="Ovchinnikova G."/>
            <person name="Kostka J."/>
            <person name="Richardson P."/>
        </authorList>
    </citation>
    <scope>NUCLEOTIDE SEQUENCE [LARGE SCALE GENOMIC DNA]</scope>
    <source>
        <strain>DSM 22248 / JCM 15807 / FRC-32</strain>
    </source>
</reference>
<protein>
    <recommendedName>
        <fullName evidence="1">Probable nicotinate-nucleotide adenylyltransferase</fullName>
        <ecNumber evidence="1">2.7.7.18</ecNumber>
    </recommendedName>
    <alternativeName>
        <fullName evidence="1">Deamido-NAD(+) diphosphorylase</fullName>
    </alternativeName>
    <alternativeName>
        <fullName evidence="1">Deamido-NAD(+) pyrophosphorylase</fullName>
    </alternativeName>
    <alternativeName>
        <fullName evidence="1">Nicotinate mononucleotide adenylyltransferase</fullName>
        <shortName evidence="1">NaMN adenylyltransferase</shortName>
    </alternativeName>
</protein>
<comment type="function">
    <text evidence="1">Catalyzes the reversible adenylation of nicotinate mononucleotide (NaMN) to nicotinic acid adenine dinucleotide (NaAD).</text>
</comment>
<comment type="catalytic activity">
    <reaction evidence="1">
        <text>nicotinate beta-D-ribonucleotide + ATP + H(+) = deamido-NAD(+) + diphosphate</text>
        <dbReference type="Rhea" id="RHEA:22860"/>
        <dbReference type="ChEBI" id="CHEBI:15378"/>
        <dbReference type="ChEBI" id="CHEBI:30616"/>
        <dbReference type="ChEBI" id="CHEBI:33019"/>
        <dbReference type="ChEBI" id="CHEBI:57502"/>
        <dbReference type="ChEBI" id="CHEBI:58437"/>
        <dbReference type="EC" id="2.7.7.18"/>
    </reaction>
</comment>
<comment type="pathway">
    <text evidence="1">Cofactor biosynthesis; NAD(+) biosynthesis; deamido-NAD(+) from nicotinate D-ribonucleotide: step 1/1.</text>
</comment>
<comment type="similarity">
    <text evidence="1">Belongs to the NadD family.</text>
</comment>
<feature type="chain" id="PRO_1000125351" description="Probable nicotinate-nucleotide adenylyltransferase">
    <location>
        <begin position="1"/>
        <end position="216"/>
    </location>
</feature>
<organism>
    <name type="scientific">Geotalea daltonii (strain DSM 22248 / JCM 15807 / FRC-32)</name>
    <name type="common">Geobacter daltonii</name>
    <dbReference type="NCBI Taxonomy" id="316067"/>
    <lineage>
        <taxon>Bacteria</taxon>
        <taxon>Pseudomonadati</taxon>
        <taxon>Thermodesulfobacteriota</taxon>
        <taxon>Desulfuromonadia</taxon>
        <taxon>Geobacterales</taxon>
        <taxon>Geobacteraceae</taxon>
        <taxon>Geotalea</taxon>
    </lineage>
</organism>
<name>NADD_GEODF</name>
<sequence>MRIGILGGTFNPIHNAHLRIAEEVRDRLDLERVMFVPAASPPHKLLAGELSFEVRYEMVRLAIADNPFFTISDIEGKRGGTSYSIHTLQELHLAYPADEFFFIIGSDSFLDIGSWKEYAAIFNLCNIVVVSRPGAVADPLDKALPVAIADRFCYHAAEKRLTHSSGHSVYSIAGTLLDISSSEIRTLTRQGRSIRYLLPATVEQYIKEQRIYNDGR</sequence>
<accession>B9M0D7</accession>
<proteinExistence type="inferred from homology"/>